<accession>A3MW04</accession>
<gene>
    <name evidence="1" type="primary">lipB</name>
    <name type="ordered locus">Pcal_1401</name>
</gene>
<dbReference type="EC" id="2.3.1.181" evidence="1"/>
<dbReference type="EMBL" id="CP000561">
    <property type="protein sequence ID" value="ABO08821.1"/>
    <property type="molecule type" value="Genomic_DNA"/>
</dbReference>
<dbReference type="RefSeq" id="WP_011850079.1">
    <property type="nucleotide sequence ID" value="NC_009073.1"/>
</dbReference>
<dbReference type="SMR" id="A3MW04"/>
<dbReference type="STRING" id="410359.Pcal_1401"/>
<dbReference type="GeneID" id="4909231"/>
<dbReference type="KEGG" id="pcl:Pcal_1401"/>
<dbReference type="eggNOG" id="arCOG01942">
    <property type="taxonomic scope" value="Archaea"/>
</dbReference>
<dbReference type="HOGENOM" id="CLU_035168_1_3_2"/>
<dbReference type="OrthoDB" id="56985at2157"/>
<dbReference type="UniPathway" id="UPA00538">
    <property type="reaction ID" value="UER00592"/>
</dbReference>
<dbReference type="Proteomes" id="UP000001431">
    <property type="component" value="Chromosome"/>
</dbReference>
<dbReference type="GO" id="GO:0005737">
    <property type="term" value="C:cytoplasm"/>
    <property type="evidence" value="ECO:0007669"/>
    <property type="project" value="UniProtKB-SubCell"/>
</dbReference>
<dbReference type="GO" id="GO:0033819">
    <property type="term" value="F:lipoyl(octanoyl) transferase activity"/>
    <property type="evidence" value="ECO:0007669"/>
    <property type="project" value="UniProtKB-EC"/>
</dbReference>
<dbReference type="GO" id="GO:0036211">
    <property type="term" value="P:protein modification process"/>
    <property type="evidence" value="ECO:0007669"/>
    <property type="project" value="InterPro"/>
</dbReference>
<dbReference type="CDD" id="cd16444">
    <property type="entry name" value="LipB"/>
    <property type="match status" value="1"/>
</dbReference>
<dbReference type="Gene3D" id="3.30.930.10">
    <property type="entry name" value="Bira Bifunctional Protein, Domain 2"/>
    <property type="match status" value="1"/>
</dbReference>
<dbReference type="HAMAP" id="MF_00013">
    <property type="entry name" value="LipB"/>
    <property type="match status" value="1"/>
</dbReference>
<dbReference type="InterPro" id="IPR045864">
    <property type="entry name" value="aa-tRNA-synth_II/BPL/LPL"/>
</dbReference>
<dbReference type="InterPro" id="IPR004143">
    <property type="entry name" value="BPL_LPL_catalytic"/>
</dbReference>
<dbReference type="InterPro" id="IPR000544">
    <property type="entry name" value="Octanoyltransferase"/>
</dbReference>
<dbReference type="InterPro" id="IPR020605">
    <property type="entry name" value="Octanoyltransferase_CS"/>
</dbReference>
<dbReference type="NCBIfam" id="TIGR00214">
    <property type="entry name" value="lipB"/>
    <property type="match status" value="1"/>
</dbReference>
<dbReference type="NCBIfam" id="NF010925">
    <property type="entry name" value="PRK14345.1"/>
    <property type="match status" value="1"/>
</dbReference>
<dbReference type="PANTHER" id="PTHR10993:SF7">
    <property type="entry name" value="LIPOYLTRANSFERASE 2, MITOCHONDRIAL-RELATED"/>
    <property type="match status" value="1"/>
</dbReference>
<dbReference type="PANTHER" id="PTHR10993">
    <property type="entry name" value="OCTANOYLTRANSFERASE"/>
    <property type="match status" value="1"/>
</dbReference>
<dbReference type="Pfam" id="PF21948">
    <property type="entry name" value="LplA-B_cat"/>
    <property type="match status" value="1"/>
</dbReference>
<dbReference type="PIRSF" id="PIRSF016262">
    <property type="entry name" value="LPLase"/>
    <property type="match status" value="1"/>
</dbReference>
<dbReference type="SUPFAM" id="SSF55681">
    <property type="entry name" value="Class II aaRS and biotin synthetases"/>
    <property type="match status" value="1"/>
</dbReference>
<dbReference type="PROSITE" id="PS51733">
    <property type="entry name" value="BPL_LPL_CATALYTIC"/>
    <property type="match status" value="1"/>
</dbReference>
<dbReference type="PROSITE" id="PS01313">
    <property type="entry name" value="LIPB"/>
    <property type="match status" value="1"/>
</dbReference>
<protein>
    <recommendedName>
        <fullName evidence="1">Probable octanoyltransferase</fullName>
        <ecNumber evidence="1">2.3.1.181</ecNumber>
    </recommendedName>
    <alternativeName>
        <fullName evidence="1">Lipoate-protein ligase B</fullName>
    </alternativeName>
    <alternativeName>
        <fullName evidence="1">Lipoyl/octanoyl transferase</fullName>
    </alternativeName>
    <alternativeName>
        <fullName evidence="1">Octanoyl-[acyl-carrier-protein]-protein N-octanoyltransferase</fullName>
    </alternativeName>
</protein>
<feature type="chain" id="PRO_1000116552" description="Probable octanoyltransferase">
    <location>
        <begin position="1"/>
        <end position="228"/>
    </location>
</feature>
<feature type="domain" description="BPL/LPL catalytic" evidence="2">
    <location>
        <begin position="27"/>
        <end position="198"/>
    </location>
</feature>
<feature type="active site" description="Acyl-thioester intermediate" evidence="1">
    <location>
        <position position="160"/>
    </location>
</feature>
<feature type="binding site" evidence="1">
    <location>
        <begin position="65"/>
        <end position="72"/>
    </location>
    <ligand>
        <name>substrate</name>
    </ligand>
</feature>
<feature type="binding site" evidence="1">
    <location>
        <begin position="129"/>
        <end position="131"/>
    </location>
    <ligand>
        <name>substrate</name>
    </ligand>
</feature>
<feature type="binding site" evidence="1">
    <location>
        <begin position="142"/>
        <end position="144"/>
    </location>
    <ligand>
        <name>substrate</name>
    </ligand>
</feature>
<feature type="site" description="Lowers pKa of active site Cys" evidence="1">
    <location>
        <position position="126"/>
    </location>
</feature>
<evidence type="ECO:0000255" key="1">
    <source>
        <dbReference type="HAMAP-Rule" id="MF_00013"/>
    </source>
</evidence>
<evidence type="ECO:0000255" key="2">
    <source>
        <dbReference type="PROSITE-ProRule" id="PRU01067"/>
    </source>
</evidence>
<keyword id="KW-0012">Acyltransferase</keyword>
<keyword id="KW-0963">Cytoplasm</keyword>
<keyword id="KW-0808">Transferase</keyword>
<sequence>MRGLDLGLLDYVSAWRMMKILHREVASGGDDAFILVEHPHVITVGKHGRTNNVVKWELFVYVVERGGDATYHGPGQLVAYPVVKLRWPLSRYLWMLEEAVIRSLRPLGVEAGRVEKHRGVWVGGKKVASIGIAVEGGVAYHGVAVNVSTDLSYFYHINPCGLHPSAITSLNQLGVEISLEEYKGLFVEAFEEVFEAKVVWVDPAPYLAAAAQLRASPTLLSAPIEAST</sequence>
<proteinExistence type="inferred from homology"/>
<organism>
    <name type="scientific">Pyrobaculum calidifontis (strain DSM 21063 / JCM 11548 / VA1)</name>
    <dbReference type="NCBI Taxonomy" id="410359"/>
    <lineage>
        <taxon>Archaea</taxon>
        <taxon>Thermoproteota</taxon>
        <taxon>Thermoprotei</taxon>
        <taxon>Thermoproteales</taxon>
        <taxon>Thermoproteaceae</taxon>
        <taxon>Pyrobaculum</taxon>
    </lineage>
</organism>
<reference key="1">
    <citation type="submission" date="2007-02" db="EMBL/GenBank/DDBJ databases">
        <title>Complete sequence of Pyrobaculum calidifontis JCM 11548.</title>
        <authorList>
            <consortium name="US DOE Joint Genome Institute"/>
            <person name="Copeland A."/>
            <person name="Lucas S."/>
            <person name="Lapidus A."/>
            <person name="Barry K."/>
            <person name="Glavina del Rio T."/>
            <person name="Dalin E."/>
            <person name="Tice H."/>
            <person name="Pitluck S."/>
            <person name="Chain P."/>
            <person name="Malfatti S."/>
            <person name="Shin M."/>
            <person name="Vergez L."/>
            <person name="Schmutz J."/>
            <person name="Larimer F."/>
            <person name="Land M."/>
            <person name="Hauser L."/>
            <person name="Kyrpides N."/>
            <person name="Mikhailova N."/>
            <person name="Cozen A.E."/>
            <person name="Fitz-Gibbon S.T."/>
            <person name="House C.H."/>
            <person name="Saltikov C."/>
            <person name="Lowe T.M."/>
            <person name="Richardson P."/>
        </authorList>
    </citation>
    <scope>NUCLEOTIDE SEQUENCE [LARGE SCALE GENOMIC DNA]</scope>
    <source>
        <strain>DSM 21063 / JCM 11548 / VA1</strain>
    </source>
</reference>
<comment type="function">
    <text evidence="1">Catalyzes the transfer of endogenously produced octanoic acid from octanoyl-acyl-carrier-protein onto the lipoyl domains of lipoate-dependent enzymes. Lipoyl-ACP can also act as a substrate although octanoyl-ACP is likely to be the physiological substrate.</text>
</comment>
<comment type="catalytic activity">
    <reaction evidence="1">
        <text>octanoyl-[ACP] + L-lysyl-[protein] = N(6)-octanoyl-L-lysyl-[protein] + holo-[ACP] + H(+)</text>
        <dbReference type="Rhea" id="RHEA:17665"/>
        <dbReference type="Rhea" id="RHEA-COMP:9636"/>
        <dbReference type="Rhea" id="RHEA-COMP:9685"/>
        <dbReference type="Rhea" id="RHEA-COMP:9752"/>
        <dbReference type="Rhea" id="RHEA-COMP:9928"/>
        <dbReference type="ChEBI" id="CHEBI:15378"/>
        <dbReference type="ChEBI" id="CHEBI:29969"/>
        <dbReference type="ChEBI" id="CHEBI:64479"/>
        <dbReference type="ChEBI" id="CHEBI:78463"/>
        <dbReference type="ChEBI" id="CHEBI:78809"/>
        <dbReference type="EC" id="2.3.1.181"/>
    </reaction>
</comment>
<comment type="pathway">
    <text evidence="1">Protein modification; protein lipoylation via endogenous pathway; protein N(6)-(lipoyl)lysine from octanoyl-[acyl-carrier-protein]: step 1/2.</text>
</comment>
<comment type="subcellular location">
    <subcellularLocation>
        <location evidence="1">Cytoplasm</location>
    </subcellularLocation>
</comment>
<comment type="miscellaneous">
    <text evidence="1">In the reaction, the free carboxyl group of octanoic acid is attached via an amide linkage to the epsilon-amino group of a specific lysine residue of lipoyl domains of lipoate-dependent enzymes.</text>
</comment>
<comment type="similarity">
    <text evidence="1">Belongs to the LipB family.</text>
</comment>
<name>LIPB_PYRCJ</name>